<sequence length="391" mass="42439">MQGLNADEVLRLLRSLIPGELATGRGQRGDPPEAQDLCADSRLDAEPIRADSLDRLNLASALNRFFRLHETGVEDRLLAVRRIGDMAELIADASQHTSGLTFSTSGSTGTPQPHHHSWAALTQEAEALANALGSHPRVIAWLPVHHLYGFVFGVALPRALGSTVIESHAAPTALFREPAPDDLIATVPARWRYLFDSNHRFPGGTGISSTAALETACRNGLLQAGLDALLEVYGATEAGGIGLRWAPSEDYRLLPHWHGDATATSSALNPDGAAVTVAPLDRLQWRDERVFRPTGRIDDIIQIGGVNVSPGHVARRLESHEAVAACAVRSHGEGSRRRLKAFIVPARSDADPETLRQTLENWIWEHLPAVERPTDLRIGTELPRNAMGKLQ</sequence>
<keyword id="KW-0067">ATP-binding</keyword>
<keyword id="KW-0436">Ligase</keyword>
<keyword id="KW-0547">Nucleotide-binding</keyword>
<keyword id="KW-0587">Phenylpropanoid metabolism</keyword>
<feature type="chain" id="PRO_0000193043" description="4-coumarate--CoA ligase">
    <location>
        <begin position="1"/>
        <end position="391" status="greater than"/>
    </location>
</feature>
<feature type="non-terminal residue">
    <location>
        <position position="391"/>
    </location>
</feature>
<accession>P42516</accession>
<evidence type="ECO:0000305" key="1"/>
<dbReference type="EC" id="6.2.1.12"/>
<dbReference type="EMBL" id="X98887">
    <property type="protein sequence ID" value="CAA67392.1"/>
    <property type="molecule type" value="Genomic_DNA"/>
</dbReference>
<dbReference type="EMBL" id="U17017">
    <property type="protein sequence ID" value="AAA61736.1"/>
    <property type="molecule type" value="Genomic_DNA"/>
</dbReference>
<dbReference type="PIR" id="C55993">
    <property type="entry name" value="C55993"/>
</dbReference>
<dbReference type="SMR" id="P42516"/>
<dbReference type="GO" id="GO:0016207">
    <property type="term" value="F:4-coumarate-CoA ligase activity"/>
    <property type="evidence" value="ECO:0007669"/>
    <property type="project" value="UniProtKB-EC"/>
</dbReference>
<dbReference type="GO" id="GO:0005524">
    <property type="term" value="F:ATP binding"/>
    <property type="evidence" value="ECO:0007669"/>
    <property type="project" value="UniProtKB-KW"/>
</dbReference>
<dbReference type="GO" id="GO:0009698">
    <property type="term" value="P:phenylpropanoid metabolic process"/>
    <property type="evidence" value="ECO:0007669"/>
    <property type="project" value="UniProtKB-KW"/>
</dbReference>
<dbReference type="Gene3D" id="3.30.300.30">
    <property type="match status" value="1"/>
</dbReference>
<dbReference type="Gene3D" id="3.40.50.12780">
    <property type="entry name" value="N-terminal domain of ligase-like"/>
    <property type="match status" value="1"/>
</dbReference>
<dbReference type="InterPro" id="IPR012743">
    <property type="entry name" value="4_coum_CoA_lig"/>
</dbReference>
<dbReference type="InterPro" id="IPR025110">
    <property type="entry name" value="AMP-bd_C"/>
</dbReference>
<dbReference type="InterPro" id="IPR045851">
    <property type="entry name" value="AMP-bd_C_sf"/>
</dbReference>
<dbReference type="InterPro" id="IPR000873">
    <property type="entry name" value="AMP-dep_synth/lig_dom"/>
</dbReference>
<dbReference type="InterPro" id="IPR042099">
    <property type="entry name" value="ANL_N_sf"/>
</dbReference>
<dbReference type="InterPro" id="IPR050237">
    <property type="entry name" value="ATP-dep_AMP-bd_enzyme"/>
</dbReference>
<dbReference type="NCBIfam" id="TIGR02372">
    <property type="entry name" value="4_coum_CoA_lig"/>
    <property type="match status" value="1"/>
</dbReference>
<dbReference type="PANTHER" id="PTHR43767">
    <property type="entry name" value="LONG-CHAIN-FATTY-ACID--COA LIGASE"/>
    <property type="match status" value="1"/>
</dbReference>
<dbReference type="PANTHER" id="PTHR43767:SF1">
    <property type="entry name" value="NONRIBOSOMAL PEPTIDE SYNTHASE PES1 (EUROFUNG)-RELATED"/>
    <property type="match status" value="1"/>
</dbReference>
<dbReference type="Pfam" id="PF00501">
    <property type="entry name" value="AMP-binding"/>
    <property type="match status" value="1"/>
</dbReference>
<dbReference type="Pfam" id="PF13193">
    <property type="entry name" value="AMP-binding_C"/>
    <property type="match status" value="1"/>
</dbReference>
<dbReference type="SUPFAM" id="SSF56801">
    <property type="entry name" value="Acetyl-CoA synthetase-like"/>
    <property type="match status" value="1"/>
</dbReference>
<name>PCL_HALHA</name>
<gene>
    <name type="primary">pcl</name>
</gene>
<protein>
    <recommendedName>
        <fullName>4-coumarate--CoA ligase</fullName>
        <shortName>4CL</shortName>
        <ecNumber>6.2.1.12</ecNumber>
    </recommendedName>
    <alternativeName>
        <fullName>4-coumaroyl-CoA synthase</fullName>
    </alternativeName>
</protein>
<organism>
    <name type="scientific">Halorhodospira halophila</name>
    <name type="common">Ectothiorhodospira halophila</name>
    <dbReference type="NCBI Taxonomy" id="1053"/>
    <lineage>
        <taxon>Bacteria</taxon>
        <taxon>Pseudomonadati</taxon>
        <taxon>Pseudomonadota</taxon>
        <taxon>Gammaproteobacteria</taxon>
        <taxon>Chromatiales</taxon>
        <taxon>Ectothiorhodospiraceae</taxon>
        <taxon>Halorhodospira</taxon>
    </lineage>
</organism>
<reference key="1">
    <citation type="journal article" date="1996" name="EMBO J.">
        <title>The xanthopsins: a new family of eubacterial blue-light photoreceptors.</title>
        <authorList>
            <person name="Kort R."/>
            <person name="Hoff W.D."/>
            <person name="van West M."/>
            <person name="Kroon A.R."/>
            <person name="Hoffer S.M."/>
            <person name="Vlieg K.H."/>
            <person name="Crielaard W."/>
            <person name="van Beeumen J.J."/>
            <person name="Hellingwerf K.J."/>
        </authorList>
    </citation>
    <scope>NUCLEOTIDE SEQUENCE [GENOMIC DNA]</scope>
    <source>
        <strain>BN9626</strain>
    </source>
</reference>
<reference key="2">
    <citation type="journal article" date="1994" name="Biochemistry">
        <title>Complete chemical structure of photoactive yellow protein: novel thioester-linked 4-hydroxycinnamyl chromophore and photocycle chemistry.</title>
        <authorList>
            <person name="Baca M."/>
            <person name="Borgstahl G.E."/>
            <person name="Boissinot M."/>
            <person name="Burke P.M."/>
            <person name="Williams D.R."/>
            <person name="Slater K.A."/>
            <person name="Getzoff E.D."/>
        </authorList>
    </citation>
    <scope>NUCLEOTIDE SEQUENCE [GENOMIC DNA] OF 1-112</scope>
    <source>
        <strain>BN9626</strain>
    </source>
</reference>
<comment type="function">
    <text>Converts p-coumaric acid into p-coumaryl CoA. This is necessary for the activation of the photoactive yellow protein (PYP) chromophore.</text>
</comment>
<comment type="catalytic activity">
    <reaction>
        <text>(E)-4-coumarate + ATP + CoA = (E)-4-coumaroyl-CoA + AMP + diphosphate</text>
        <dbReference type="Rhea" id="RHEA:19641"/>
        <dbReference type="ChEBI" id="CHEBI:12876"/>
        <dbReference type="ChEBI" id="CHEBI:30616"/>
        <dbReference type="ChEBI" id="CHEBI:33019"/>
        <dbReference type="ChEBI" id="CHEBI:57287"/>
        <dbReference type="ChEBI" id="CHEBI:85008"/>
        <dbReference type="ChEBI" id="CHEBI:456215"/>
        <dbReference type="EC" id="6.2.1.12"/>
    </reaction>
</comment>
<comment type="similarity">
    <text evidence="1">Belongs to the ATP-dependent AMP-binding enzyme family.</text>
</comment>
<proteinExistence type="inferred from homology"/>